<accession>P68328</accession>
<accession>P18552</accession>
<reference key="1">
    <citation type="journal article" date="1991" name="Gene">
        <title>Sequence analysis of the 4.7-kb BamHI-EcoRI fragment of the equine herpesvirus type-1 short unique region.</title>
        <authorList>
            <person name="Elton D.M."/>
            <person name="Halliburton I.W."/>
            <person name="Killington R.A."/>
            <person name="Meredith D.M."/>
            <person name="Bonass W.A."/>
        </authorList>
    </citation>
    <scope>NUCLEOTIDE SEQUENCE [GENOMIC DNA]</scope>
</reference>
<reference key="2">
    <citation type="journal article" date="1991" name="Am. J. Vet. Res.">
        <title>Location of open reading frames coding for equine herpesvirus type-1 glycoproteins with homology to gE and gI of herpes simplex virus.</title>
        <authorList>
            <person name="Elton D.M."/>
            <person name="Bonass W.A."/>
            <person name="Killington R.A."/>
            <person name="Meredith D.M."/>
            <person name="Halliburton I.W."/>
        </authorList>
    </citation>
    <scope>NUCLEOTIDE SEQUENCE [GENOMIC DNA]</scope>
</reference>
<proteinExistence type="inferred from homology"/>
<sequence>MELLAASRACIFFGLVTVLDAWGVQQVELSEGAWAMIDGRDVLTPTNTTTRVTKAWTFLETPPGCAGDISVKKVCVSHSLCEDNIIIGKHCNLLTGEHGIALAEFNVVNGSLRRTDDVYFVNGTVFPILAETRSVLQIHRATPSIAGVYTLHVSIDGMMKHSVVLLTVKKPPKQPQPRLRVKTPPPVTVPQVPVKTHTDFVVHGYHSRVYADGESFELSVNLESHIVEPSFSAEIQWYYMNTSSSSCDLFRVFETCIFHPTAMACLHPEQHTCSFTSPIRATKILHRVYGNCSDHGNSWPSRCHSTLLGNRLYFIQPAQNRVDLLFKDTPASATGLYVFVLLYNGHPEAWTYTLLSTANHFMNVLTDVTRPRLGEHFYTDLGHKIITPHPSVATTEELGAWTRHYLAFLLVIICTCAALLVALVVWGCILYIRSNRKPYEVLNPFETVYTSVPSNDPSDEVLVFERLASDSDDSFDSDSDEELEYPPPPKPAPQLPPYQFVDGGDAPSGRSGFKVWFRDTPEASPVPLHKPTLQGPDYSRVASKLKSILK</sequence>
<dbReference type="EMBL" id="M36299">
    <property type="protein sequence ID" value="AAA66548.1"/>
    <property type="molecule type" value="Genomic_DNA"/>
</dbReference>
<dbReference type="PIR" id="B36803">
    <property type="entry name" value="VGBEG5"/>
</dbReference>
<dbReference type="SMR" id="P68328"/>
<dbReference type="GlyCosmos" id="P68328">
    <property type="glycosylation" value="5 sites, No reported glycans"/>
</dbReference>
<dbReference type="KEGG" id="vg:2948576"/>
<dbReference type="GO" id="GO:0044175">
    <property type="term" value="C:host cell endosome membrane"/>
    <property type="evidence" value="ECO:0007669"/>
    <property type="project" value="UniProtKB-SubCell"/>
</dbReference>
<dbReference type="GO" id="GO:0044178">
    <property type="term" value="C:host cell Golgi membrane"/>
    <property type="evidence" value="ECO:0007669"/>
    <property type="project" value="UniProtKB-SubCell"/>
</dbReference>
<dbReference type="GO" id="GO:0044156">
    <property type="term" value="C:host cell junction"/>
    <property type="evidence" value="ECO:0007669"/>
    <property type="project" value="UniProtKB-SubCell"/>
</dbReference>
<dbReference type="GO" id="GO:0016020">
    <property type="term" value="C:membrane"/>
    <property type="evidence" value="ECO:0007669"/>
    <property type="project" value="UniProtKB-KW"/>
</dbReference>
<dbReference type="GO" id="GO:0019031">
    <property type="term" value="C:viral envelope"/>
    <property type="evidence" value="ECO:0007669"/>
    <property type="project" value="UniProtKB-KW"/>
</dbReference>
<dbReference type="GO" id="GO:0055036">
    <property type="term" value="C:virion membrane"/>
    <property type="evidence" value="ECO:0007669"/>
    <property type="project" value="UniProtKB-SubCell"/>
</dbReference>
<dbReference type="Gene3D" id="2.60.40.10">
    <property type="entry name" value="Immunoglobulins"/>
    <property type="match status" value="1"/>
</dbReference>
<dbReference type="InterPro" id="IPR003404">
    <property type="entry name" value="Herpes_glycopE_Fc"/>
</dbReference>
<dbReference type="InterPro" id="IPR036179">
    <property type="entry name" value="Ig-like_dom_sf"/>
</dbReference>
<dbReference type="InterPro" id="IPR013783">
    <property type="entry name" value="Ig-like_fold"/>
</dbReference>
<dbReference type="Pfam" id="PF02480">
    <property type="entry name" value="Herpes_gE"/>
    <property type="match status" value="1"/>
</dbReference>
<dbReference type="SUPFAM" id="SSF48726">
    <property type="entry name" value="Immunoglobulin"/>
    <property type="match status" value="1"/>
</dbReference>
<comment type="function">
    <text evidence="1">In epithelial cells, the heterodimer gE/gI is required for the cell-to-cell spread of the virus, by sorting nascent virions to cell junctions. Once the virus reaches the cell junctions, virus particles can spread to adjacent cells extremely rapidly through interactions with cellular receptors that accumulate at these junctions. Implicated in basolateral spread in polarized cells. In neuronal cells, gE/gI is essential for the anterograde spread of the infection throughout the host nervous system. Together with US9, the heterodimer gE/gI is involved in the sorting and transport of viral structural components toward axon tips (By similarity).</text>
</comment>
<comment type="subunit">
    <text evidence="1">Interacts with gI.</text>
</comment>
<comment type="subcellular location">
    <subcellularLocation>
        <location evidence="1">Virion membrane</location>
        <topology evidence="1">Single-pass type I membrane protein</topology>
    </subcellularLocation>
    <subcellularLocation>
        <location evidence="1">Host cell membrane</location>
        <topology evidence="1">Single-pass type I membrane protein</topology>
    </subcellularLocation>
    <subcellularLocation>
        <location evidence="1">Host cell junction</location>
    </subcellularLocation>
    <subcellularLocation>
        <location evidence="1">Host Golgi apparatus membrane</location>
        <topology evidence="1">Single-pass membrane protein</topology>
    </subcellularLocation>
    <subcellularLocation>
        <location evidence="1">Host endosome membrane</location>
        <topology evidence="1">Single-pass membrane protein</topology>
    </subcellularLocation>
    <text evidence="1">During virion morphogenesis, this protein probably accumulates in the endosomes and trans-Golgi where secondary envelopment occurs. It is probably transported to the cell surface from where it is endocytosed and directed to the trans-Golgi network (TGN), maybe through an interaction with PACS-1 sorting protein. The heterodimer gE/gI then redistributes to cell junctions to promote cell-cell spread later in the infection (By similarity).</text>
</comment>
<comment type="PTM">
    <text evidence="4">Phosphorylated on serines within the acidic cluster. Phosphorylation determines whether endocytosed viral gE traffics to the trans-Golgi network or recycles to the cell membrane.</text>
</comment>
<comment type="similarity">
    <text evidence="4">Belongs to the alphaherpesvirinae glycoprotein E family.</text>
</comment>
<gene>
    <name type="primary">gE</name>
</gene>
<organismHost>
    <name type="scientific">Equus caballus</name>
    <name type="common">Horse</name>
    <dbReference type="NCBI Taxonomy" id="9796"/>
</organismHost>
<organism>
    <name type="scientific">Equine herpesvirus 1 (strain AB1)</name>
    <name type="common">EHV-1</name>
    <name type="synonym">Equine abortion virus</name>
    <dbReference type="NCBI Taxonomy" id="10328"/>
    <lineage>
        <taxon>Viruses</taxon>
        <taxon>Duplodnaviria</taxon>
        <taxon>Heunggongvirae</taxon>
        <taxon>Peploviricota</taxon>
        <taxon>Herviviricetes</taxon>
        <taxon>Herpesvirales</taxon>
        <taxon>Orthoherpesviridae</taxon>
        <taxon>Alphaherpesvirinae</taxon>
        <taxon>Varicellovirus</taxon>
        <taxon>Varicellovirus equidalpha1</taxon>
        <taxon>Equid alphaherpesvirus 1</taxon>
    </lineage>
</organism>
<protein>
    <recommendedName>
        <fullName>Envelope glycoprotein E</fullName>
        <shortName>gE</shortName>
    </recommendedName>
</protein>
<evidence type="ECO:0000250" key="1"/>
<evidence type="ECO:0000255" key="2"/>
<evidence type="ECO:0000256" key="3">
    <source>
        <dbReference type="SAM" id="MobiDB-lite"/>
    </source>
</evidence>
<evidence type="ECO:0000305" key="4"/>
<feature type="signal peptide" evidence="2">
    <location>
        <begin position="1"/>
        <end position="23"/>
    </location>
</feature>
<feature type="chain" id="PRO_0000038228" description="Envelope glycoprotein E">
    <location>
        <begin position="24"/>
        <end position="550"/>
    </location>
</feature>
<feature type="topological domain" description="Virion surface" evidence="2">
    <location>
        <begin position="24"/>
        <end position="408"/>
    </location>
</feature>
<feature type="transmembrane region" description="Helical" evidence="2">
    <location>
        <begin position="409"/>
        <end position="425"/>
    </location>
</feature>
<feature type="topological domain" description="Intravirion" evidence="2">
    <location>
        <begin position="426"/>
        <end position="550"/>
    </location>
</feature>
<feature type="region of interest" description="Interaction with gI" evidence="1">
    <location>
        <begin position="65"/>
        <end position="91"/>
    </location>
</feature>
<feature type="region of interest" description="Acidic" evidence="1">
    <location>
        <begin position="468"/>
        <end position="482"/>
    </location>
</feature>
<feature type="region of interest" description="Disordered" evidence="3">
    <location>
        <begin position="471"/>
        <end position="513"/>
    </location>
</feature>
<feature type="short sequence motif" description="Internalization motif" evidence="2">
    <location>
        <begin position="449"/>
        <end position="452"/>
    </location>
</feature>
<feature type="compositionally biased region" description="Acidic residues" evidence="3">
    <location>
        <begin position="471"/>
        <end position="484"/>
    </location>
</feature>
<feature type="compositionally biased region" description="Pro residues" evidence="3">
    <location>
        <begin position="485"/>
        <end position="496"/>
    </location>
</feature>
<feature type="glycosylation site" description="N-linked (GlcNAc...) asparagine; by host" evidence="2">
    <location>
        <position position="47"/>
    </location>
</feature>
<feature type="glycosylation site" description="N-linked (GlcNAc...) asparagine; by host" evidence="2">
    <location>
        <position position="109"/>
    </location>
</feature>
<feature type="glycosylation site" description="N-linked (GlcNAc...) asparagine; by host" evidence="2">
    <location>
        <position position="122"/>
    </location>
</feature>
<feature type="glycosylation site" description="N-linked (GlcNAc...) asparagine; by host" evidence="2">
    <location>
        <position position="241"/>
    </location>
</feature>
<feature type="glycosylation site" description="N-linked (GlcNAc...) asparagine; by host" evidence="2">
    <location>
        <position position="291"/>
    </location>
</feature>
<feature type="disulfide bond" evidence="1">
    <location>
        <begin position="247"/>
        <end position="273"/>
    </location>
</feature>
<feature type="disulfide bond" evidence="1">
    <location>
        <begin position="256"/>
        <end position="265"/>
    </location>
</feature>
<feature type="disulfide bond" evidence="1">
    <location>
        <begin position="292"/>
        <end position="303"/>
    </location>
</feature>
<keyword id="KW-1015">Disulfide bond</keyword>
<keyword id="KW-0325">Glycoprotein</keyword>
<keyword id="KW-1031">Host cell junction</keyword>
<keyword id="KW-1032">Host cell membrane</keyword>
<keyword id="KW-1039">Host endosome</keyword>
<keyword id="KW-1040">Host Golgi apparatus</keyword>
<keyword id="KW-1043">Host membrane</keyword>
<keyword id="KW-0472">Membrane</keyword>
<keyword id="KW-0732">Signal</keyword>
<keyword id="KW-0812">Transmembrane</keyword>
<keyword id="KW-1133">Transmembrane helix</keyword>
<keyword id="KW-0261">Viral envelope protein</keyword>
<keyword id="KW-0946">Virion</keyword>
<name>GE_EHV1A</name>